<accession>A9ILE7</accession>
<keyword id="KW-0678">Repressor</keyword>
<keyword id="KW-0346">Stress response</keyword>
<keyword id="KW-0804">Transcription</keyword>
<keyword id="KW-0805">Transcription regulation</keyword>
<evidence type="ECO:0000255" key="1">
    <source>
        <dbReference type="HAMAP-Rule" id="MF_00081"/>
    </source>
</evidence>
<reference key="1">
    <citation type="journal article" date="2007" name="Nat. Genet.">
        <title>Genomic analysis of Bartonella identifies type IV secretion systems as host adaptability factors.</title>
        <authorList>
            <person name="Saenz H.L."/>
            <person name="Engel P."/>
            <person name="Stoeckli M.C."/>
            <person name="Lanz C."/>
            <person name="Raddatz G."/>
            <person name="Vayssier-Taussat M."/>
            <person name="Birtles R."/>
            <person name="Schuster S.C."/>
            <person name="Dehio C."/>
        </authorList>
    </citation>
    <scope>NUCLEOTIDE SEQUENCE [LARGE SCALE GENOMIC DNA]</scope>
    <source>
        <strain>CIP 105476 / IBS 506</strain>
    </source>
</reference>
<organism>
    <name type="scientific">Bartonella tribocorum (strain CIP 105476 / IBS 506)</name>
    <dbReference type="NCBI Taxonomy" id="382640"/>
    <lineage>
        <taxon>Bacteria</taxon>
        <taxon>Pseudomonadati</taxon>
        <taxon>Pseudomonadota</taxon>
        <taxon>Alphaproteobacteria</taxon>
        <taxon>Hyphomicrobiales</taxon>
        <taxon>Bartonellaceae</taxon>
        <taxon>Bartonella</taxon>
    </lineage>
</organism>
<gene>
    <name evidence="1" type="primary">hrcA</name>
    <name type="ordered locus">BT_0055</name>
</gene>
<dbReference type="EMBL" id="AM260525">
    <property type="protein sequence ID" value="CAK00556.1"/>
    <property type="molecule type" value="Genomic_DNA"/>
</dbReference>
<dbReference type="RefSeq" id="WP_012230353.1">
    <property type="nucleotide sequence ID" value="NC_010161.1"/>
</dbReference>
<dbReference type="SMR" id="A9ILE7"/>
<dbReference type="KEGG" id="btr:BT_0055"/>
<dbReference type="eggNOG" id="COG1420">
    <property type="taxonomic scope" value="Bacteria"/>
</dbReference>
<dbReference type="HOGENOM" id="CLU_050019_0_0_5"/>
<dbReference type="Proteomes" id="UP000001592">
    <property type="component" value="Chromosome"/>
</dbReference>
<dbReference type="GO" id="GO:0003677">
    <property type="term" value="F:DNA binding"/>
    <property type="evidence" value="ECO:0007669"/>
    <property type="project" value="InterPro"/>
</dbReference>
<dbReference type="GO" id="GO:0045892">
    <property type="term" value="P:negative regulation of DNA-templated transcription"/>
    <property type="evidence" value="ECO:0007669"/>
    <property type="project" value="UniProtKB-UniRule"/>
</dbReference>
<dbReference type="Gene3D" id="3.30.450.40">
    <property type="match status" value="1"/>
</dbReference>
<dbReference type="Gene3D" id="3.30.390.60">
    <property type="entry name" value="Heat-inducible transcription repressor hrca homolog, domain 3"/>
    <property type="match status" value="1"/>
</dbReference>
<dbReference type="Gene3D" id="1.10.10.10">
    <property type="entry name" value="Winged helix-like DNA-binding domain superfamily/Winged helix DNA-binding domain"/>
    <property type="match status" value="1"/>
</dbReference>
<dbReference type="HAMAP" id="MF_00081">
    <property type="entry name" value="HrcA"/>
    <property type="match status" value="1"/>
</dbReference>
<dbReference type="InterPro" id="IPR029016">
    <property type="entry name" value="GAF-like_dom_sf"/>
</dbReference>
<dbReference type="InterPro" id="IPR002571">
    <property type="entry name" value="HrcA"/>
</dbReference>
<dbReference type="InterPro" id="IPR021153">
    <property type="entry name" value="HrcA_C"/>
</dbReference>
<dbReference type="InterPro" id="IPR036388">
    <property type="entry name" value="WH-like_DNA-bd_sf"/>
</dbReference>
<dbReference type="InterPro" id="IPR036390">
    <property type="entry name" value="WH_DNA-bd_sf"/>
</dbReference>
<dbReference type="InterPro" id="IPR005104">
    <property type="entry name" value="WHTH_HrcA_DNA-bd"/>
</dbReference>
<dbReference type="InterPro" id="IPR023120">
    <property type="entry name" value="WHTH_transcript_rep_HrcA_IDD"/>
</dbReference>
<dbReference type="NCBIfam" id="TIGR00331">
    <property type="entry name" value="hrcA"/>
    <property type="match status" value="1"/>
</dbReference>
<dbReference type="PANTHER" id="PTHR34824">
    <property type="entry name" value="HEAT-INDUCIBLE TRANSCRIPTION REPRESSOR HRCA"/>
    <property type="match status" value="1"/>
</dbReference>
<dbReference type="PANTHER" id="PTHR34824:SF1">
    <property type="entry name" value="HEAT-INDUCIBLE TRANSCRIPTION REPRESSOR HRCA"/>
    <property type="match status" value="1"/>
</dbReference>
<dbReference type="Pfam" id="PF01628">
    <property type="entry name" value="HrcA"/>
    <property type="match status" value="1"/>
</dbReference>
<dbReference type="Pfam" id="PF03444">
    <property type="entry name" value="HrcA_DNA-bdg"/>
    <property type="match status" value="1"/>
</dbReference>
<dbReference type="PIRSF" id="PIRSF005485">
    <property type="entry name" value="HrcA"/>
    <property type="match status" value="1"/>
</dbReference>
<dbReference type="SUPFAM" id="SSF55781">
    <property type="entry name" value="GAF domain-like"/>
    <property type="match status" value="1"/>
</dbReference>
<dbReference type="SUPFAM" id="SSF46785">
    <property type="entry name" value="Winged helix' DNA-binding domain"/>
    <property type="match status" value="1"/>
</dbReference>
<name>HRCA_BART1</name>
<feature type="chain" id="PRO_1000075280" description="Heat-inducible transcription repressor HrcA">
    <location>
        <begin position="1"/>
        <end position="356"/>
    </location>
</feature>
<proteinExistence type="inferred from homology"/>
<comment type="function">
    <text evidence="1">Negative regulator of class I heat shock genes (grpE-dnaK-dnaJ and groELS operons). Prevents heat-shock induction of these operons.</text>
</comment>
<comment type="similarity">
    <text evidence="1">Belongs to the HrcA family.</text>
</comment>
<protein>
    <recommendedName>
        <fullName evidence="1">Heat-inducible transcription repressor HrcA</fullName>
    </recommendedName>
</protein>
<sequence length="356" mass="39606">MKHKPIDNELKYLDERSRDIFRHIVEAYLNDGEPVGSRNLSRLLQQTLSPATIRNVMSDLEHLGLIYAPHVSAGRMPTQSGLRFFVDAFMEAGDLPNEERENIEMQVKEAGHAQSVEHFLVQASRVLSDLSRGAGLVLATKQEGTLKHIEFVRLDREHALAVLVTQQGEVENRIVHLPEGVTHAQLTEATNFLNAHIQGRTLSEAKEEIACLCAETRAALDDLSHHLVETGLALLGGEGADHKIHLIVRGRSNLLEDVKAEEDLERLRHLFDDLETRESMAQLLDLTDEGSGVRIFIGSENKLFSLSGSSLVVAPYRDSQQRVIGALGVIGPTRLNYARIVPMVDYTAQLVSQLLR</sequence>